<dbReference type="EMBL" id="L20800">
    <property type="protein sequence ID" value="AAA20117.1"/>
    <property type="molecule type" value="Unassigned_DNA"/>
</dbReference>
<dbReference type="PIR" id="S41522">
    <property type="entry name" value="S41522"/>
</dbReference>
<dbReference type="RefSeq" id="WP_012478245.1">
    <property type="nucleotide sequence ID" value="NC_010937.1"/>
</dbReference>
<dbReference type="RefSeq" id="YP_001967743.1">
    <property type="nucleotide sequence ID" value="NC_010937.1"/>
</dbReference>
<dbReference type="SMR" id="Q46306"/>
<dbReference type="CARD" id="ARO:3000195">
    <property type="molecule name" value="tetB(P)"/>
    <property type="mechanism identifier" value="ARO:0001003"/>
    <property type="mechanism name" value="antibiotic target protection"/>
</dbReference>
<dbReference type="KEGG" id="ag:AAA20117"/>
<dbReference type="GO" id="GO:0005525">
    <property type="term" value="F:GTP binding"/>
    <property type="evidence" value="ECO:0007669"/>
    <property type="project" value="UniProtKB-KW"/>
</dbReference>
<dbReference type="GO" id="GO:0003924">
    <property type="term" value="F:GTPase activity"/>
    <property type="evidence" value="ECO:0007669"/>
    <property type="project" value="InterPro"/>
</dbReference>
<dbReference type="GO" id="GO:0046677">
    <property type="term" value="P:response to antibiotic"/>
    <property type="evidence" value="ECO:0007669"/>
    <property type="project" value="UniProtKB-KW"/>
</dbReference>
<dbReference type="GO" id="GO:0032790">
    <property type="term" value="P:ribosome disassembly"/>
    <property type="evidence" value="ECO:0007669"/>
    <property type="project" value="TreeGrafter"/>
</dbReference>
<dbReference type="GO" id="GO:0006412">
    <property type="term" value="P:translation"/>
    <property type="evidence" value="ECO:0007669"/>
    <property type="project" value="UniProtKB-KW"/>
</dbReference>
<dbReference type="CDD" id="cd03711">
    <property type="entry name" value="Tet_C"/>
    <property type="match status" value="1"/>
</dbReference>
<dbReference type="CDD" id="cd03690">
    <property type="entry name" value="Tet_II"/>
    <property type="match status" value="1"/>
</dbReference>
<dbReference type="CDD" id="cd16258">
    <property type="entry name" value="Tet_III"/>
    <property type="match status" value="1"/>
</dbReference>
<dbReference type="CDD" id="cd01684">
    <property type="entry name" value="Tet_like_IV"/>
    <property type="match status" value="1"/>
</dbReference>
<dbReference type="CDD" id="cd04168">
    <property type="entry name" value="TetM_like"/>
    <property type="match status" value="1"/>
</dbReference>
<dbReference type="Gene3D" id="3.30.230.10">
    <property type="match status" value="1"/>
</dbReference>
<dbReference type="Gene3D" id="3.30.70.240">
    <property type="match status" value="1"/>
</dbReference>
<dbReference type="Gene3D" id="3.30.70.870">
    <property type="entry name" value="Elongation Factor G (Translational Gtpase), domain 3"/>
    <property type="match status" value="1"/>
</dbReference>
<dbReference type="Gene3D" id="3.40.50.300">
    <property type="entry name" value="P-loop containing nucleotide triphosphate hydrolases"/>
    <property type="match status" value="1"/>
</dbReference>
<dbReference type="Gene3D" id="2.40.30.10">
    <property type="entry name" value="Translation factors"/>
    <property type="match status" value="1"/>
</dbReference>
<dbReference type="InterPro" id="IPR041095">
    <property type="entry name" value="EFG_II"/>
</dbReference>
<dbReference type="InterPro" id="IPR035647">
    <property type="entry name" value="EFG_III/V"/>
</dbReference>
<dbReference type="InterPro" id="IPR000640">
    <property type="entry name" value="EFG_V-like"/>
</dbReference>
<dbReference type="InterPro" id="IPR031157">
    <property type="entry name" value="G_TR_CS"/>
</dbReference>
<dbReference type="InterPro" id="IPR027417">
    <property type="entry name" value="P-loop_NTPase"/>
</dbReference>
<dbReference type="InterPro" id="IPR020568">
    <property type="entry name" value="Ribosomal_Su5_D2-typ_SF"/>
</dbReference>
<dbReference type="InterPro" id="IPR014721">
    <property type="entry name" value="Ribsml_uS5_D2-typ_fold_subgr"/>
</dbReference>
<dbReference type="InterPro" id="IPR005225">
    <property type="entry name" value="Small_GTP-bd"/>
</dbReference>
<dbReference type="InterPro" id="IPR000795">
    <property type="entry name" value="T_Tr_GTP-bd_dom"/>
</dbReference>
<dbReference type="InterPro" id="IPR035650">
    <property type="entry name" value="Tet_C"/>
</dbReference>
<dbReference type="InterPro" id="IPR009000">
    <property type="entry name" value="Transl_B-barrel_sf"/>
</dbReference>
<dbReference type="InterPro" id="IPR005517">
    <property type="entry name" value="Transl_elong_EFG/EF2_IV"/>
</dbReference>
<dbReference type="NCBIfam" id="TIGR00231">
    <property type="entry name" value="small_GTP"/>
    <property type="match status" value="1"/>
</dbReference>
<dbReference type="NCBIfam" id="NF012153">
    <property type="entry name" value="tet_protect"/>
    <property type="match status" value="1"/>
</dbReference>
<dbReference type="PANTHER" id="PTHR43261:SF1">
    <property type="entry name" value="RIBOSOME-RELEASING FACTOR 2, MITOCHONDRIAL"/>
    <property type="match status" value="1"/>
</dbReference>
<dbReference type="PANTHER" id="PTHR43261">
    <property type="entry name" value="TRANSLATION ELONGATION FACTOR G-RELATED"/>
    <property type="match status" value="1"/>
</dbReference>
<dbReference type="Pfam" id="PF00679">
    <property type="entry name" value="EFG_C"/>
    <property type="match status" value="1"/>
</dbReference>
<dbReference type="Pfam" id="PF14492">
    <property type="entry name" value="EFG_III"/>
    <property type="match status" value="1"/>
</dbReference>
<dbReference type="Pfam" id="PF03764">
    <property type="entry name" value="EFG_IV"/>
    <property type="match status" value="1"/>
</dbReference>
<dbReference type="Pfam" id="PF00009">
    <property type="entry name" value="GTP_EFTU"/>
    <property type="match status" value="1"/>
</dbReference>
<dbReference type="PRINTS" id="PR00315">
    <property type="entry name" value="ELONGATNFCT"/>
</dbReference>
<dbReference type="PRINTS" id="PR01037">
    <property type="entry name" value="TCRTETOQM"/>
</dbReference>
<dbReference type="SMART" id="SM00838">
    <property type="entry name" value="EFG_C"/>
    <property type="match status" value="1"/>
</dbReference>
<dbReference type="SMART" id="SM00889">
    <property type="entry name" value="EFG_IV"/>
    <property type="match status" value="1"/>
</dbReference>
<dbReference type="SUPFAM" id="SSF54980">
    <property type="entry name" value="EF-G C-terminal domain-like"/>
    <property type="match status" value="2"/>
</dbReference>
<dbReference type="SUPFAM" id="SSF52540">
    <property type="entry name" value="P-loop containing nucleoside triphosphate hydrolases"/>
    <property type="match status" value="1"/>
</dbReference>
<dbReference type="SUPFAM" id="SSF54211">
    <property type="entry name" value="Ribosomal protein S5 domain 2-like"/>
    <property type="match status" value="1"/>
</dbReference>
<dbReference type="SUPFAM" id="SSF50447">
    <property type="entry name" value="Translation proteins"/>
    <property type="match status" value="1"/>
</dbReference>
<dbReference type="PROSITE" id="PS00301">
    <property type="entry name" value="G_TR_1"/>
    <property type="match status" value="1"/>
</dbReference>
<dbReference type="PROSITE" id="PS51722">
    <property type="entry name" value="G_TR_2"/>
    <property type="match status" value="1"/>
</dbReference>
<comment type="function">
    <text>Abolishes the inhibitory effect of tetracyclin on protein synthesis by a non-covalent modification of the ribosomes.</text>
</comment>
<comment type="similarity">
    <text evidence="2">Belongs to the TRAFAC class translation factor GTPase superfamily. Classic translation factor GTPase family. TetM/TetO subfamily.</text>
</comment>
<evidence type="ECO:0000250" key="1"/>
<evidence type="ECO:0000255" key="2">
    <source>
        <dbReference type="PROSITE-ProRule" id="PRU01059"/>
    </source>
</evidence>
<proteinExistence type="inferred from homology"/>
<gene>
    <name type="primary">tetP</name>
    <name type="synonym">tetB(P)</name>
</gene>
<reference key="1">
    <citation type="journal article" date="1994" name="Mol. Microbiol.">
        <title>The Clostridium perfringens Tet P determinant comprises two overlapping genes: tetA(P), which mediates active tetracycline efflux, and tetB(P), which is related to the ribosomal protection family of tetracycline-resistance determinants.</title>
        <authorList>
            <person name="Sloan J."/>
            <person name="McMurry L.M."/>
            <person name="Lyras D."/>
            <person name="Levy S.B."/>
            <person name="Rood J.I."/>
        </authorList>
    </citation>
    <scope>NUCLEOTIDE SEQUENCE [GENOMIC DNA]</scope>
    <source>
        <strain>CW92</strain>
    </source>
</reference>
<protein>
    <recommendedName>
        <fullName>Tetracycline resistance protein TetP</fullName>
    </recommendedName>
    <alternativeName>
        <fullName>TetB(P)</fullName>
    </alternativeName>
</protein>
<accession>Q46306</accession>
<keyword id="KW-0046">Antibiotic resistance</keyword>
<keyword id="KW-0342">GTP-binding</keyword>
<keyword id="KW-0547">Nucleotide-binding</keyword>
<keyword id="KW-0648">Protein biosynthesis</keyword>
<organism>
    <name type="scientific">Clostridium perfringens</name>
    <dbReference type="NCBI Taxonomy" id="1502"/>
    <lineage>
        <taxon>Bacteria</taxon>
        <taxon>Bacillati</taxon>
        <taxon>Bacillota</taxon>
        <taxon>Clostridia</taxon>
        <taxon>Eubacteriales</taxon>
        <taxon>Clostridiaceae</taxon>
        <taxon>Clostridium</taxon>
    </lineage>
</organism>
<name>TETP_CLOPF</name>
<sequence length="652" mass="72723">MKKIINIGIVAHVDAGKTTITENLLYYSGAIKSVGRVDLGNTQTDSMELERKRGITIKSSTISFNWNNVKVNIIDTPGHVDFISEVERSLNSLDGAILVISGVEGIQSQTRILFDTLKELNIPTIIFVNKLDRIGANFNKVFEEIKKNMSNKVVRLQEVYDVGSKAVYIKKLFDTCIINDDAINVLSDLDEAFLERYIGGIEPDKEEIQEKLSLYAREGSLYPVFCGAAAIGLGIEDLLDGICSYFPFASNDCESDLSGVVFKIERTSKNEKKVYVRLFGGKISVRDKIQVPNKEIAEKVKKINRLENGGVVEAQRIEAGDIGILYGLTSFQVGDVIGISNDKIKNISIAKPALKTTISAIDKEKNPELFKALTLLAEEDPLLAFAMNDIDKEIYVNLFGEVQMEILSSMLDDLYGIKVEFSNIETIYKETPKGFGASIMHMQEDLNPFWATVGLEIEPAGRGEGLRYISNVSVGSLPKSFQNAIEEAVIKTSKQGLFGWEVTDVKVTLSCGEFFSPASTPADFRNVTPMVFMEALYKAQTVLLEPLHEFELKIPQNALSKAVWDLETMRATFDNPIVIGDEFSIKGLIPVENSKEYKMKIASYTEGRGMFVTKFYGYKEASAEFSKARKKTTYDPLNKKEYLLHKLNAIRD</sequence>
<feature type="chain" id="PRO_0000091508" description="Tetracycline resistance protein TetP">
    <location>
        <begin position="1"/>
        <end position="652"/>
    </location>
</feature>
<feature type="domain" description="tr-type G" evidence="2">
    <location>
        <begin position="2"/>
        <end position="252"/>
    </location>
</feature>
<feature type="binding site" evidence="1">
    <location>
        <begin position="11"/>
        <end position="18"/>
    </location>
    <ligand>
        <name>GTP</name>
        <dbReference type="ChEBI" id="CHEBI:37565"/>
    </ligand>
</feature>
<feature type="binding site" evidence="1">
    <location>
        <begin position="75"/>
        <end position="79"/>
    </location>
    <ligand>
        <name>GTP</name>
        <dbReference type="ChEBI" id="CHEBI:37565"/>
    </ligand>
</feature>
<feature type="binding site" evidence="1">
    <location>
        <begin position="129"/>
        <end position="132"/>
    </location>
    <ligand>
        <name>GTP</name>
        <dbReference type="ChEBI" id="CHEBI:37565"/>
    </ligand>
</feature>